<feature type="chain" id="PRO_1000189925" description="Probable GTP-binding protein EngB">
    <location>
        <begin position="1"/>
        <end position="222"/>
    </location>
</feature>
<feature type="domain" description="EngB-type G" evidence="1">
    <location>
        <begin position="22"/>
        <end position="197"/>
    </location>
</feature>
<feature type="region of interest" description="Disordered" evidence="2">
    <location>
        <begin position="201"/>
        <end position="222"/>
    </location>
</feature>
<feature type="compositionally biased region" description="Basic and acidic residues" evidence="2">
    <location>
        <begin position="212"/>
        <end position="222"/>
    </location>
</feature>
<feature type="binding site" evidence="1">
    <location>
        <position position="37"/>
    </location>
    <ligand>
        <name>Mg(2+)</name>
        <dbReference type="ChEBI" id="CHEBI:18420"/>
    </ligand>
</feature>
<feature type="binding site" evidence="1">
    <location>
        <position position="59"/>
    </location>
    <ligand>
        <name>Mg(2+)</name>
        <dbReference type="ChEBI" id="CHEBI:18420"/>
    </ligand>
</feature>
<keyword id="KW-0131">Cell cycle</keyword>
<keyword id="KW-0132">Cell division</keyword>
<keyword id="KW-0342">GTP-binding</keyword>
<keyword id="KW-0460">Magnesium</keyword>
<keyword id="KW-0479">Metal-binding</keyword>
<keyword id="KW-0547">Nucleotide-binding</keyword>
<keyword id="KW-1185">Reference proteome</keyword>
<keyword id="KW-0717">Septation</keyword>
<proteinExistence type="inferred from homology"/>
<evidence type="ECO:0000255" key="1">
    <source>
        <dbReference type="HAMAP-Rule" id="MF_00321"/>
    </source>
</evidence>
<evidence type="ECO:0000256" key="2">
    <source>
        <dbReference type="SAM" id="MobiDB-lite"/>
    </source>
</evidence>
<gene>
    <name evidence="1" type="primary">engB</name>
    <name type="ordered locus">LHK_03095</name>
</gene>
<dbReference type="EMBL" id="CP001154">
    <property type="protein sequence ID" value="ACO76073.1"/>
    <property type="molecule type" value="Genomic_DNA"/>
</dbReference>
<dbReference type="RefSeq" id="WP_012698536.1">
    <property type="nucleotide sequence ID" value="NC_012559.1"/>
</dbReference>
<dbReference type="SMR" id="C1D5Q6"/>
<dbReference type="STRING" id="557598.LHK_03095"/>
<dbReference type="KEGG" id="lhk:LHK_03095"/>
<dbReference type="eggNOG" id="COG0218">
    <property type="taxonomic scope" value="Bacteria"/>
</dbReference>
<dbReference type="HOGENOM" id="CLU_033732_1_1_4"/>
<dbReference type="Proteomes" id="UP000002010">
    <property type="component" value="Chromosome"/>
</dbReference>
<dbReference type="GO" id="GO:0005829">
    <property type="term" value="C:cytosol"/>
    <property type="evidence" value="ECO:0007669"/>
    <property type="project" value="TreeGrafter"/>
</dbReference>
<dbReference type="GO" id="GO:0005525">
    <property type="term" value="F:GTP binding"/>
    <property type="evidence" value="ECO:0007669"/>
    <property type="project" value="UniProtKB-UniRule"/>
</dbReference>
<dbReference type="GO" id="GO:0046872">
    <property type="term" value="F:metal ion binding"/>
    <property type="evidence" value="ECO:0007669"/>
    <property type="project" value="UniProtKB-KW"/>
</dbReference>
<dbReference type="GO" id="GO:0000917">
    <property type="term" value="P:division septum assembly"/>
    <property type="evidence" value="ECO:0007669"/>
    <property type="project" value="UniProtKB-KW"/>
</dbReference>
<dbReference type="CDD" id="cd01876">
    <property type="entry name" value="YihA_EngB"/>
    <property type="match status" value="1"/>
</dbReference>
<dbReference type="FunFam" id="3.40.50.300:FF:000098">
    <property type="entry name" value="Probable GTP-binding protein EngB"/>
    <property type="match status" value="1"/>
</dbReference>
<dbReference type="Gene3D" id="3.40.50.300">
    <property type="entry name" value="P-loop containing nucleotide triphosphate hydrolases"/>
    <property type="match status" value="1"/>
</dbReference>
<dbReference type="HAMAP" id="MF_00321">
    <property type="entry name" value="GTPase_EngB"/>
    <property type="match status" value="1"/>
</dbReference>
<dbReference type="InterPro" id="IPR030393">
    <property type="entry name" value="G_ENGB_dom"/>
</dbReference>
<dbReference type="InterPro" id="IPR006073">
    <property type="entry name" value="GTP-bd"/>
</dbReference>
<dbReference type="InterPro" id="IPR019987">
    <property type="entry name" value="GTP-bd_ribosome_bio_YsxC"/>
</dbReference>
<dbReference type="InterPro" id="IPR027417">
    <property type="entry name" value="P-loop_NTPase"/>
</dbReference>
<dbReference type="NCBIfam" id="TIGR03598">
    <property type="entry name" value="GTPase_YsxC"/>
    <property type="match status" value="1"/>
</dbReference>
<dbReference type="PANTHER" id="PTHR11649:SF13">
    <property type="entry name" value="ENGB-TYPE G DOMAIN-CONTAINING PROTEIN"/>
    <property type="match status" value="1"/>
</dbReference>
<dbReference type="PANTHER" id="PTHR11649">
    <property type="entry name" value="MSS1/TRME-RELATED GTP-BINDING PROTEIN"/>
    <property type="match status" value="1"/>
</dbReference>
<dbReference type="Pfam" id="PF01926">
    <property type="entry name" value="MMR_HSR1"/>
    <property type="match status" value="1"/>
</dbReference>
<dbReference type="SUPFAM" id="SSF52540">
    <property type="entry name" value="P-loop containing nucleoside triphosphate hydrolases"/>
    <property type="match status" value="1"/>
</dbReference>
<dbReference type="PROSITE" id="PS51706">
    <property type="entry name" value="G_ENGB"/>
    <property type="match status" value="1"/>
</dbReference>
<name>ENGB_LARHH</name>
<comment type="function">
    <text evidence="1">Necessary for normal cell division and for the maintenance of normal septation.</text>
</comment>
<comment type="cofactor">
    <cofactor evidence="1">
        <name>Mg(2+)</name>
        <dbReference type="ChEBI" id="CHEBI:18420"/>
    </cofactor>
</comment>
<comment type="similarity">
    <text evidence="1">Belongs to the TRAFAC class TrmE-Era-EngA-EngB-Septin-like GTPase superfamily. EngB GTPase family.</text>
</comment>
<accession>C1D5Q6</accession>
<sequence>MPLFQNATFFTTVNHLRDLPPTSAEIAFVGRSNAGKSSAINALANRTRLAYVSKTPGRTQHINFFRLASHFDYFLVDLPGYGYAEVPESVRAHWVELLGRYLQTRESLIGLLLIMDARHPLKELDMRMLDFFRMRGQPVHILLSKSDKMNRQEQNKTLATVRQALAGYPQVSIQLFSSSKKQGLEQVETVVAGWFAGLEARQADELTDGEPDDRTPDPDSAS</sequence>
<organism>
    <name type="scientific">Laribacter hongkongensis (strain HLHK9)</name>
    <dbReference type="NCBI Taxonomy" id="557598"/>
    <lineage>
        <taxon>Bacteria</taxon>
        <taxon>Pseudomonadati</taxon>
        <taxon>Pseudomonadota</taxon>
        <taxon>Betaproteobacteria</taxon>
        <taxon>Neisseriales</taxon>
        <taxon>Aquaspirillaceae</taxon>
        <taxon>Laribacter</taxon>
    </lineage>
</organism>
<protein>
    <recommendedName>
        <fullName evidence="1">Probable GTP-binding protein EngB</fullName>
    </recommendedName>
</protein>
<reference key="1">
    <citation type="journal article" date="2009" name="PLoS Genet.">
        <title>The complete genome and proteome of Laribacter hongkongensis reveal potential mechanisms for adaptations to different temperatures and habitats.</title>
        <authorList>
            <person name="Woo P.C.Y."/>
            <person name="Lau S.K.P."/>
            <person name="Tse H."/>
            <person name="Teng J.L.L."/>
            <person name="Curreem S.O."/>
            <person name="Tsang A.K.L."/>
            <person name="Fan R.Y.Y."/>
            <person name="Wong G.K.M."/>
            <person name="Huang Y."/>
            <person name="Loman N.J."/>
            <person name="Snyder L.A.S."/>
            <person name="Cai J.J."/>
            <person name="Huang J.-D."/>
            <person name="Mak W."/>
            <person name="Pallen M.J."/>
            <person name="Lok S."/>
            <person name="Yuen K.-Y."/>
        </authorList>
    </citation>
    <scope>NUCLEOTIDE SEQUENCE [LARGE SCALE GENOMIC DNA]</scope>
    <source>
        <strain>HLHK9</strain>
    </source>
</reference>